<comment type="function">
    <text evidence="7 10">Catalyzes the transfer of a phosphate from ATP to alpha-D-galactose and participates in the first committed step in the catabolism of galactose.</text>
</comment>
<comment type="catalytic activity">
    <reaction evidence="7 10">
        <text>alpha-D-galactose + ATP = alpha-D-galactose 1-phosphate + ADP + H(+)</text>
        <dbReference type="Rhea" id="RHEA:13553"/>
        <dbReference type="ChEBI" id="CHEBI:15378"/>
        <dbReference type="ChEBI" id="CHEBI:28061"/>
        <dbReference type="ChEBI" id="CHEBI:30616"/>
        <dbReference type="ChEBI" id="CHEBI:58336"/>
        <dbReference type="ChEBI" id="CHEBI:456216"/>
        <dbReference type="EC" id="2.7.1.6"/>
    </reaction>
    <physiologicalReaction direction="left-to-right" evidence="14">
        <dbReference type="Rhea" id="RHEA:13554"/>
    </physiologicalReaction>
</comment>
<comment type="biophysicochemical properties">
    <kinetics>
        <KM evidence="7">970 uM for alpha-D-galactose</KM>
        <KM evidence="7">34 uM for ATP</KM>
    </kinetics>
</comment>
<comment type="pathway">
    <text evidence="7 10">Carbohydrate metabolism; galactose metabolism.</text>
</comment>
<comment type="subunit">
    <text evidence="13">Homodimer.</text>
</comment>
<comment type="interaction">
    <interactant intactId="EBI-2269932">
        <id>P51570</id>
    </interactant>
    <interactant intactId="EBI-726549">
        <id>Q9NPJ4</id>
        <label>PNRC2</label>
    </interactant>
    <organismsDiffer>false</organismsDiffer>
    <experiments>3</experiments>
</comment>
<comment type="disease" evidence="3 4 5 6 7 9 11">
    <disease id="DI-01643">
        <name>Galactosemia 2</name>
        <acronym>GALAC2</acronym>
        <description>A form of galactosemia, an inborn error of galactose metabolism typically manifesting in the neonatal period, after ingestion of galactose, with jaundice, hepatosplenomegaly, hepatocellular insufficiency, food intolerance, hypoglycemia, renal tubular dysfunction, muscle hypotonia, sepsis and cataract. GALAC2 inheritance is autosomal recessive.</description>
        <dbReference type="MIM" id="230200"/>
    </disease>
    <text>The disease is caused by variants affecting the gene represented in this entry.</text>
</comment>
<comment type="similarity">
    <text evidence="12">Belongs to the GHMP kinase family. GalK subfamily.</text>
</comment>
<comment type="sequence caution" evidence="12">
    <conflict type="erroneous initiation">
        <sequence resource="EMBL-CDS" id="BAG64778"/>
    </conflict>
    <text>Extended N-terminus.</text>
</comment>
<comment type="sequence caution" evidence="12">
    <conflict type="erroneous initiation">
        <sequence resource="EMBL-CDS" id="EAW89316"/>
    </conflict>
    <text>Extended N-terminus.</text>
</comment>
<comment type="online information" name="Galactosemia Proteins Database">
    <link uri="http://www.protein-variants.eu/galactosemia/"/>
</comment>
<evidence type="ECO:0000250" key="1">
    <source>
        <dbReference type="UniProtKB" id="P04385"/>
    </source>
</evidence>
<evidence type="ECO:0000250" key="2">
    <source>
        <dbReference type="UniProtKB" id="Q9HHB6"/>
    </source>
</evidence>
<evidence type="ECO:0000269" key="3">
    <source>
    </source>
</evidence>
<evidence type="ECO:0000269" key="4">
    <source>
    </source>
</evidence>
<evidence type="ECO:0000269" key="5">
    <source>
    </source>
</evidence>
<evidence type="ECO:0000269" key="6">
    <source>
    </source>
</evidence>
<evidence type="ECO:0000269" key="7">
    <source>
    </source>
</evidence>
<evidence type="ECO:0000269" key="8">
    <source>
    </source>
</evidence>
<evidence type="ECO:0000269" key="9">
    <source>
    </source>
</evidence>
<evidence type="ECO:0000269" key="10">
    <source>
    </source>
</evidence>
<evidence type="ECO:0000269" key="11">
    <source>
    </source>
</evidence>
<evidence type="ECO:0000305" key="12"/>
<evidence type="ECO:0000305" key="13">
    <source>
    </source>
</evidence>
<evidence type="ECO:0000305" key="14">
    <source>
    </source>
</evidence>
<evidence type="ECO:0000312" key="15">
    <source>
        <dbReference type="HGNC" id="HGNC:4118"/>
    </source>
</evidence>
<evidence type="ECO:0007744" key="16">
    <source>
    </source>
</evidence>
<evidence type="ECO:0007829" key="17">
    <source>
        <dbReference type="PDB" id="1WUU"/>
    </source>
</evidence>
<evidence type="ECO:0007829" key="18">
    <source>
        <dbReference type="PDB" id="6Q3X"/>
    </source>
</evidence>
<evidence type="ECO:0007829" key="19">
    <source>
        <dbReference type="PDB" id="6ZGX"/>
    </source>
</evidence>
<evidence type="ECO:0007829" key="20">
    <source>
        <dbReference type="PDB" id="6ZGY"/>
    </source>
</evidence>
<evidence type="ECO:0007829" key="21">
    <source>
        <dbReference type="PDB" id="6ZH0"/>
    </source>
</evidence>
<keyword id="KW-0002">3D-structure</keyword>
<keyword id="KW-0067">ATP-binding</keyword>
<keyword id="KW-0119">Carbohydrate metabolism</keyword>
<keyword id="KW-0898">Cataract</keyword>
<keyword id="KW-0903">Direct protein sequencing</keyword>
<keyword id="KW-0225">Disease variant</keyword>
<keyword id="KW-0299">Galactose metabolism</keyword>
<keyword id="KW-0418">Kinase</keyword>
<keyword id="KW-0547">Nucleotide-binding</keyword>
<keyword id="KW-0597">Phosphoprotein</keyword>
<keyword id="KW-1267">Proteomics identification</keyword>
<keyword id="KW-1185">Reference proteome</keyword>
<keyword id="KW-0808">Transferase</keyword>
<gene>
    <name evidence="15" type="primary">GALK1</name>
    <name type="synonym">GALK</name>
</gene>
<proteinExistence type="evidence at protein level"/>
<dbReference type="EC" id="2.7.1.6" evidence="7 10"/>
<dbReference type="EMBL" id="U26401">
    <property type="protein sequence ID" value="AAA96147.1"/>
    <property type="molecule type" value="mRNA"/>
</dbReference>
<dbReference type="EMBL" id="L76927">
    <property type="protein sequence ID" value="AAB51607.1"/>
    <property type="molecule type" value="Genomic_DNA"/>
</dbReference>
<dbReference type="EMBL" id="AK303832">
    <property type="protein sequence ID" value="BAG64778.1"/>
    <property type="status" value="ALT_INIT"/>
    <property type="molecule type" value="mRNA"/>
</dbReference>
<dbReference type="EMBL" id="AK314890">
    <property type="protein sequence ID" value="BAG37404.1"/>
    <property type="molecule type" value="mRNA"/>
</dbReference>
<dbReference type="EMBL" id="BT007005">
    <property type="protein sequence ID" value="AAP35651.1"/>
    <property type="molecule type" value="mRNA"/>
</dbReference>
<dbReference type="EMBL" id="AC087749">
    <property type="status" value="NOT_ANNOTATED_CDS"/>
    <property type="molecule type" value="Genomic_DNA"/>
</dbReference>
<dbReference type="EMBL" id="CH471099">
    <property type="protein sequence ID" value="EAW89316.1"/>
    <property type="status" value="ALT_INIT"/>
    <property type="molecule type" value="Genomic_DNA"/>
</dbReference>
<dbReference type="EMBL" id="BC001166">
    <property type="protein sequence ID" value="AAH01166.1"/>
    <property type="molecule type" value="mRNA"/>
</dbReference>
<dbReference type="CCDS" id="CCDS11728.1"/>
<dbReference type="RefSeq" id="NP_000145.1">
    <property type="nucleotide sequence ID" value="NM_000154.2"/>
</dbReference>
<dbReference type="RefSeq" id="NP_001368914.1">
    <property type="nucleotide sequence ID" value="NM_001381985.1"/>
</dbReference>
<dbReference type="PDB" id="1WUU">
    <property type="method" value="X-ray"/>
    <property type="resolution" value="2.50 A"/>
    <property type="chains" value="A/B/C/D=2-392"/>
</dbReference>
<dbReference type="PDB" id="6GR2">
    <property type="method" value="X-ray"/>
    <property type="resolution" value="2.49 A"/>
    <property type="chains" value="A/B/C/D/E/F/G/H=2-392"/>
</dbReference>
<dbReference type="PDB" id="6Q3W">
    <property type="method" value="X-ray"/>
    <property type="resolution" value="1.96 A"/>
    <property type="chains" value="A/B/C/D=2-392"/>
</dbReference>
<dbReference type="PDB" id="6Q3X">
    <property type="method" value="X-ray"/>
    <property type="resolution" value="2.10 A"/>
    <property type="chains" value="A/B=2-392"/>
</dbReference>
<dbReference type="PDB" id="6Q8Z">
    <property type="method" value="X-ray"/>
    <property type="resolution" value="2.40 A"/>
    <property type="chains" value="A/B/C/D=2-392"/>
</dbReference>
<dbReference type="PDB" id="6Q90">
    <property type="method" value="X-ray"/>
    <property type="resolution" value="2.40 A"/>
    <property type="chains" value="A/B/C/D=2-392"/>
</dbReference>
<dbReference type="PDB" id="6Q91">
    <property type="method" value="X-ray"/>
    <property type="resolution" value="2.40 A"/>
    <property type="chains" value="A/B/C/D=2-392"/>
</dbReference>
<dbReference type="PDB" id="6QJE">
    <property type="method" value="X-ray"/>
    <property type="resolution" value="2.40 A"/>
    <property type="chains" value="A/B/C/D=2-392"/>
</dbReference>
<dbReference type="PDB" id="6ZFH">
    <property type="method" value="X-ray"/>
    <property type="resolution" value="2.44 A"/>
    <property type="chains" value="A/B/C/D/E/F/G/H=2-392"/>
</dbReference>
<dbReference type="PDB" id="6ZGV">
    <property type="method" value="X-ray"/>
    <property type="resolution" value="2.30 A"/>
    <property type="chains" value="A/B/D/E=2-392"/>
</dbReference>
<dbReference type="PDB" id="6ZGW">
    <property type="method" value="X-ray"/>
    <property type="resolution" value="2.30 A"/>
    <property type="chains" value="A/B/D/E=2-392"/>
</dbReference>
<dbReference type="PDB" id="6ZGX">
    <property type="method" value="X-ray"/>
    <property type="resolution" value="1.86 A"/>
    <property type="chains" value="A/B/D/E=2-392"/>
</dbReference>
<dbReference type="PDB" id="6ZGY">
    <property type="method" value="X-ray"/>
    <property type="resolution" value="2.30 A"/>
    <property type="chains" value="A/B/D/E=2-392"/>
</dbReference>
<dbReference type="PDB" id="6ZGZ">
    <property type="method" value="X-ray"/>
    <property type="resolution" value="2.30 A"/>
    <property type="chains" value="A/B/D/E=2-392"/>
</dbReference>
<dbReference type="PDB" id="6ZH0">
    <property type="method" value="X-ray"/>
    <property type="resolution" value="2.50 A"/>
    <property type="chains" value="A/B/D/E=2-392"/>
</dbReference>
<dbReference type="PDB" id="7OZX">
    <property type="method" value="X-ray"/>
    <property type="resolution" value="2.30 A"/>
    <property type="chains" value="A/B/C/D=2-392"/>
</dbReference>
<dbReference type="PDB" id="7RCL">
    <property type="method" value="X-ray"/>
    <property type="resolution" value="2.40 A"/>
    <property type="chains" value="A/B/C/D=1-392"/>
</dbReference>
<dbReference type="PDB" id="7RCM">
    <property type="method" value="X-ray"/>
    <property type="resolution" value="2.10 A"/>
    <property type="chains" value="A/B=1-392"/>
</dbReference>
<dbReference type="PDB" id="7S49">
    <property type="method" value="X-ray"/>
    <property type="resolution" value="2.20 A"/>
    <property type="chains" value="A/B=1-392"/>
</dbReference>
<dbReference type="PDB" id="7S4C">
    <property type="method" value="X-ray"/>
    <property type="resolution" value="2.20 A"/>
    <property type="chains" value="A/B=1-392"/>
</dbReference>
<dbReference type="PDBsum" id="1WUU"/>
<dbReference type="PDBsum" id="6GR2"/>
<dbReference type="PDBsum" id="6Q3W"/>
<dbReference type="PDBsum" id="6Q3X"/>
<dbReference type="PDBsum" id="6Q8Z"/>
<dbReference type="PDBsum" id="6Q90"/>
<dbReference type="PDBsum" id="6Q91"/>
<dbReference type="PDBsum" id="6QJE"/>
<dbReference type="PDBsum" id="6ZFH"/>
<dbReference type="PDBsum" id="6ZGV"/>
<dbReference type="PDBsum" id="6ZGW"/>
<dbReference type="PDBsum" id="6ZGX"/>
<dbReference type="PDBsum" id="6ZGY"/>
<dbReference type="PDBsum" id="6ZGZ"/>
<dbReference type="PDBsum" id="6ZH0"/>
<dbReference type="PDBsum" id="7OZX"/>
<dbReference type="PDBsum" id="7RCL"/>
<dbReference type="PDBsum" id="7RCM"/>
<dbReference type="PDBsum" id="7S49"/>
<dbReference type="PDBsum" id="7S4C"/>
<dbReference type="SMR" id="P51570"/>
<dbReference type="BioGRID" id="108857">
    <property type="interactions" value="82"/>
</dbReference>
<dbReference type="FunCoup" id="P51570">
    <property type="interactions" value="668"/>
</dbReference>
<dbReference type="IntAct" id="P51570">
    <property type="interactions" value="44"/>
</dbReference>
<dbReference type="MINT" id="P51570"/>
<dbReference type="STRING" id="9606.ENSP00000225614"/>
<dbReference type="BindingDB" id="P51570"/>
<dbReference type="ChEMBL" id="CHEMBL1293257"/>
<dbReference type="DrugBank" id="DB04395">
    <property type="generic name" value="Phosphoaminophosphonic Acid-Adenylate Ester"/>
</dbReference>
<dbReference type="GlyGen" id="P51570">
    <property type="glycosylation" value="1 site, 1 O-linked glycan (1 site)"/>
</dbReference>
<dbReference type="iPTMnet" id="P51570"/>
<dbReference type="PhosphoSitePlus" id="P51570"/>
<dbReference type="BioMuta" id="GALK1"/>
<dbReference type="DMDM" id="1730187"/>
<dbReference type="OGP" id="P51570"/>
<dbReference type="REPRODUCTION-2DPAGE" id="IPI00019383"/>
<dbReference type="CPTAC" id="CPTAC-375"/>
<dbReference type="CPTAC" id="CPTAC-376"/>
<dbReference type="jPOST" id="P51570"/>
<dbReference type="MassIVE" id="P51570"/>
<dbReference type="PaxDb" id="9606-ENSP00000465930"/>
<dbReference type="PeptideAtlas" id="P51570"/>
<dbReference type="Pumba" id="P51570"/>
<dbReference type="Antibodypedia" id="2046">
    <property type="antibodies" value="282 antibodies from 32 providers"/>
</dbReference>
<dbReference type="DNASU" id="2584"/>
<dbReference type="Ensembl" id="ENST00000225614.6">
    <property type="protein sequence ID" value="ENSP00000225614.1"/>
    <property type="gene ID" value="ENSG00000108479.13"/>
</dbReference>
<dbReference type="Ensembl" id="ENST00000588479.6">
    <property type="protein sequence ID" value="ENSP00000465930.1"/>
    <property type="gene ID" value="ENSG00000108479.13"/>
</dbReference>
<dbReference type="GeneID" id="2584"/>
<dbReference type="KEGG" id="hsa:2584"/>
<dbReference type="MANE-Select" id="ENST00000588479.6">
    <property type="protein sequence ID" value="ENSP00000465930.1"/>
    <property type="RefSeq nucleotide sequence ID" value="NM_000154.2"/>
    <property type="RefSeq protein sequence ID" value="NP_000145.1"/>
</dbReference>
<dbReference type="AGR" id="HGNC:4118"/>
<dbReference type="CTD" id="2584"/>
<dbReference type="DisGeNET" id="2584"/>
<dbReference type="GeneCards" id="GALK1"/>
<dbReference type="HGNC" id="HGNC:4118">
    <property type="gene designation" value="GALK1"/>
</dbReference>
<dbReference type="HPA" id="ENSG00000108479">
    <property type="expression patterns" value="Tissue enhanced (liver)"/>
</dbReference>
<dbReference type="MalaCards" id="GALK1"/>
<dbReference type="MIM" id="230200">
    <property type="type" value="phenotype"/>
</dbReference>
<dbReference type="MIM" id="604313">
    <property type="type" value="gene"/>
</dbReference>
<dbReference type="neXtProt" id="NX_P51570"/>
<dbReference type="OpenTargets" id="ENSG00000108479"/>
<dbReference type="Orphanet" id="79237">
    <property type="disease" value="Galactokinase deficiency"/>
</dbReference>
<dbReference type="PharmGKB" id="PA28533"/>
<dbReference type="VEuPathDB" id="HostDB:ENSG00000108479"/>
<dbReference type="eggNOG" id="KOG0631">
    <property type="taxonomic scope" value="Eukaryota"/>
</dbReference>
<dbReference type="GeneTree" id="ENSGT00950000183187"/>
<dbReference type="HOGENOM" id="CLU_017814_2_0_1"/>
<dbReference type="InParanoid" id="P51570"/>
<dbReference type="OMA" id="VMPCAIN"/>
<dbReference type="OrthoDB" id="275179at2759"/>
<dbReference type="PAN-GO" id="P51570">
    <property type="GO annotations" value="3 GO annotations based on evolutionary models"/>
</dbReference>
<dbReference type="PhylomeDB" id="P51570"/>
<dbReference type="TreeFam" id="TF354326"/>
<dbReference type="BioCyc" id="MetaCyc:HS03112-MONOMER"/>
<dbReference type="BRENDA" id="2.7.1.6">
    <property type="organism ID" value="2681"/>
</dbReference>
<dbReference type="PathwayCommons" id="P51570"/>
<dbReference type="Reactome" id="R-HSA-5609976">
    <property type="pathway name" value="Defective GALK1 causes GALCT2"/>
</dbReference>
<dbReference type="Reactome" id="R-HSA-70370">
    <property type="pathway name" value="Galactose catabolism"/>
</dbReference>
<dbReference type="SABIO-RK" id="P51570"/>
<dbReference type="SignaLink" id="P51570"/>
<dbReference type="UniPathway" id="UPA00214"/>
<dbReference type="BioGRID-ORCS" id="2584">
    <property type="hits" value="35 hits in 1156 CRISPR screens"/>
</dbReference>
<dbReference type="EvolutionaryTrace" id="P51570"/>
<dbReference type="GenomeRNAi" id="2584"/>
<dbReference type="Pharos" id="P51570">
    <property type="development level" value="Tbio"/>
</dbReference>
<dbReference type="PRO" id="PR:P51570"/>
<dbReference type="Proteomes" id="UP000005640">
    <property type="component" value="Chromosome 17"/>
</dbReference>
<dbReference type="RNAct" id="P51570">
    <property type="molecule type" value="protein"/>
</dbReference>
<dbReference type="Bgee" id="ENSG00000108479">
    <property type="expression patterns" value="Expressed in right lobe of liver and 97 other cell types or tissues"/>
</dbReference>
<dbReference type="ExpressionAtlas" id="P51570">
    <property type="expression patterns" value="baseline and differential"/>
</dbReference>
<dbReference type="GO" id="GO:0005737">
    <property type="term" value="C:cytoplasm"/>
    <property type="evidence" value="ECO:0000314"/>
    <property type="project" value="UniProtKB"/>
</dbReference>
<dbReference type="GO" id="GO:0005829">
    <property type="term" value="C:cytosol"/>
    <property type="evidence" value="ECO:0000318"/>
    <property type="project" value="GO_Central"/>
</dbReference>
<dbReference type="GO" id="GO:0070062">
    <property type="term" value="C:extracellular exosome"/>
    <property type="evidence" value="ECO:0007005"/>
    <property type="project" value="UniProtKB"/>
</dbReference>
<dbReference type="GO" id="GO:0016020">
    <property type="term" value="C:membrane"/>
    <property type="evidence" value="ECO:0007005"/>
    <property type="project" value="UniProtKB"/>
</dbReference>
<dbReference type="GO" id="GO:0005524">
    <property type="term" value="F:ATP binding"/>
    <property type="evidence" value="ECO:0000314"/>
    <property type="project" value="UniProtKB"/>
</dbReference>
<dbReference type="GO" id="GO:0004335">
    <property type="term" value="F:galactokinase activity"/>
    <property type="evidence" value="ECO:0000314"/>
    <property type="project" value="UniProtKB"/>
</dbReference>
<dbReference type="GO" id="GO:0005534">
    <property type="term" value="F:galactose binding"/>
    <property type="evidence" value="ECO:0000314"/>
    <property type="project" value="UniProtKB"/>
</dbReference>
<dbReference type="GO" id="GO:0019402">
    <property type="term" value="P:galactitol metabolic process"/>
    <property type="evidence" value="ECO:0007669"/>
    <property type="project" value="Ensembl"/>
</dbReference>
<dbReference type="GO" id="GO:0033499">
    <property type="term" value="P:galactose catabolic process via UDP-galactose, Leloir pathway"/>
    <property type="evidence" value="ECO:0000304"/>
    <property type="project" value="Reactome"/>
</dbReference>
<dbReference type="GO" id="GO:0006012">
    <property type="term" value="P:galactose metabolic process"/>
    <property type="evidence" value="ECO:0000315"/>
    <property type="project" value="UniProtKB"/>
</dbReference>
<dbReference type="GO" id="GO:0061623">
    <property type="term" value="P:glycolytic process from galactose"/>
    <property type="evidence" value="ECO:0007669"/>
    <property type="project" value="Ensembl"/>
</dbReference>
<dbReference type="FunFam" id="3.30.230.10:FF:000040">
    <property type="entry name" value="Galactokinase 1"/>
    <property type="match status" value="1"/>
</dbReference>
<dbReference type="FunFam" id="3.30.70.890:FF:000007">
    <property type="entry name" value="Galactokinase 1"/>
    <property type="match status" value="1"/>
</dbReference>
<dbReference type="Gene3D" id="3.30.230.10">
    <property type="match status" value="1"/>
</dbReference>
<dbReference type="Gene3D" id="3.30.70.890">
    <property type="entry name" value="GHMP kinase, C-terminal domain"/>
    <property type="match status" value="1"/>
</dbReference>
<dbReference type="InterPro" id="IPR000705">
    <property type="entry name" value="Galactokinase"/>
</dbReference>
<dbReference type="InterPro" id="IPR019741">
    <property type="entry name" value="Galactokinase_CS"/>
</dbReference>
<dbReference type="InterPro" id="IPR019539">
    <property type="entry name" value="GalKase_N"/>
</dbReference>
<dbReference type="InterPro" id="IPR013750">
    <property type="entry name" value="GHMP_kinase_C_dom"/>
</dbReference>
<dbReference type="InterPro" id="IPR036554">
    <property type="entry name" value="GHMP_kinase_C_sf"/>
</dbReference>
<dbReference type="InterPro" id="IPR006204">
    <property type="entry name" value="GHMP_kinase_N_dom"/>
</dbReference>
<dbReference type="InterPro" id="IPR006203">
    <property type="entry name" value="GHMP_knse_ATP-bd_CS"/>
</dbReference>
<dbReference type="InterPro" id="IPR006206">
    <property type="entry name" value="Mevalonate/galactokinase"/>
</dbReference>
<dbReference type="InterPro" id="IPR020568">
    <property type="entry name" value="Ribosomal_Su5_D2-typ_SF"/>
</dbReference>
<dbReference type="InterPro" id="IPR014721">
    <property type="entry name" value="Ribsml_uS5_D2-typ_fold_subgr"/>
</dbReference>
<dbReference type="NCBIfam" id="TIGR00131">
    <property type="entry name" value="gal_kin"/>
    <property type="match status" value="1"/>
</dbReference>
<dbReference type="PANTHER" id="PTHR10457:SF7">
    <property type="entry name" value="GALACTOKINASE-RELATED"/>
    <property type="match status" value="1"/>
</dbReference>
<dbReference type="PANTHER" id="PTHR10457">
    <property type="entry name" value="MEVALONATE KINASE/GALACTOKINASE"/>
    <property type="match status" value="1"/>
</dbReference>
<dbReference type="Pfam" id="PF10509">
    <property type="entry name" value="GalKase_gal_bdg"/>
    <property type="match status" value="1"/>
</dbReference>
<dbReference type="Pfam" id="PF08544">
    <property type="entry name" value="GHMP_kinases_C"/>
    <property type="match status" value="1"/>
</dbReference>
<dbReference type="Pfam" id="PF00288">
    <property type="entry name" value="GHMP_kinases_N"/>
    <property type="match status" value="1"/>
</dbReference>
<dbReference type="PIRSF" id="PIRSF000530">
    <property type="entry name" value="Galactokinase"/>
    <property type="match status" value="1"/>
</dbReference>
<dbReference type="PRINTS" id="PR00473">
    <property type="entry name" value="GALCTOKINASE"/>
</dbReference>
<dbReference type="PRINTS" id="PR00959">
    <property type="entry name" value="MEVGALKINASE"/>
</dbReference>
<dbReference type="SUPFAM" id="SSF55060">
    <property type="entry name" value="GHMP Kinase, C-terminal domain"/>
    <property type="match status" value="1"/>
</dbReference>
<dbReference type="SUPFAM" id="SSF54211">
    <property type="entry name" value="Ribosomal protein S5 domain 2-like"/>
    <property type="match status" value="1"/>
</dbReference>
<dbReference type="PROSITE" id="PS00106">
    <property type="entry name" value="GALACTOKINASE"/>
    <property type="match status" value="1"/>
</dbReference>
<dbReference type="PROSITE" id="PS00627">
    <property type="entry name" value="GHMP_KINASES_ATP"/>
    <property type="match status" value="1"/>
</dbReference>
<protein>
    <recommendedName>
        <fullName evidence="12">Galactokinase</fullName>
        <ecNumber evidence="7 10">2.7.1.6</ecNumber>
    </recommendedName>
    <alternativeName>
        <fullName>Galactose kinase</fullName>
    </alternativeName>
</protein>
<name>GALK1_HUMAN</name>
<organism>
    <name type="scientific">Homo sapiens</name>
    <name type="common">Human</name>
    <dbReference type="NCBI Taxonomy" id="9606"/>
    <lineage>
        <taxon>Eukaryota</taxon>
        <taxon>Metazoa</taxon>
        <taxon>Chordata</taxon>
        <taxon>Craniata</taxon>
        <taxon>Vertebrata</taxon>
        <taxon>Euteleostomi</taxon>
        <taxon>Mammalia</taxon>
        <taxon>Eutheria</taxon>
        <taxon>Euarchontoglires</taxon>
        <taxon>Primates</taxon>
        <taxon>Haplorrhini</taxon>
        <taxon>Catarrhini</taxon>
        <taxon>Hominidae</taxon>
        <taxon>Homo</taxon>
    </lineage>
</organism>
<accession>P51570</accession>
<accession>B2RC07</accession>
<accession>B4E1G6</accession>
<feature type="chain" id="PRO_0000184645" description="Galactokinase">
    <location>
        <begin position="1"/>
        <end position="392"/>
    </location>
</feature>
<feature type="active site" description="Proton acceptor" evidence="2">
    <location>
        <position position="186"/>
    </location>
</feature>
<feature type="binding site" evidence="1">
    <location>
        <position position="37"/>
    </location>
    <ligand>
        <name>alpha-D-galactose</name>
        <dbReference type="ChEBI" id="CHEBI:28061"/>
    </ligand>
</feature>
<feature type="binding site" evidence="1">
    <location>
        <position position="43"/>
    </location>
    <ligand>
        <name>alpha-D-galactose</name>
        <dbReference type="ChEBI" id="CHEBI:28061"/>
    </ligand>
</feature>
<feature type="binding site" evidence="1">
    <location>
        <position position="44"/>
    </location>
    <ligand>
        <name>alpha-D-galactose</name>
        <dbReference type="ChEBI" id="CHEBI:28061"/>
    </ligand>
</feature>
<feature type="binding site" evidence="1">
    <location>
        <position position="46"/>
    </location>
    <ligand>
        <name>alpha-D-galactose</name>
        <dbReference type="ChEBI" id="CHEBI:28061"/>
    </ligand>
</feature>
<feature type="binding site" evidence="1">
    <location>
        <position position="136"/>
    </location>
    <ligand>
        <name>ATP</name>
        <dbReference type="ChEBI" id="CHEBI:30616"/>
    </ligand>
</feature>
<feature type="binding site" evidence="1">
    <location>
        <position position="138"/>
    </location>
    <ligand>
        <name>ATP</name>
        <dbReference type="ChEBI" id="CHEBI:30616"/>
    </ligand>
</feature>
<feature type="binding site" evidence="1">
    <location>
        <position position="140"/>
    </location>
    <ligand>
        <name>ATP</name>
        <dbReference type="ChEBI" id="CHEBI:30616"/>
    </ligand>
</feature>
<feature type="binding site" evidence="1">
    <location>
        <position position="141"/>
    </location>
    <ligand>
        <name>ATP</name>
        <dbReference type="ChEBI" id="CHEBI:30616"/>
    </ligand>
</feature>
<feature type="binding site" evidence="1">
    <location>
        <position position="186"/>
    </location>
    <ligand>
        <name>alpha-D-galactose</name>
        <dbReference type="ChEBI" id="CHEBI:28061"/>
    </ligand>
</feature>
<feature type="binding site" evidence="1">
    <location>
        <position position="236"/>
    </location>
    <ligand>
        <name>alpha-D-galactose</name>
        <dbReference type="ChEBI" id="CHEBI:28061"/>
    </ligand>
</feature>
<feature type="site" description="Transition state stabilizer" evidence="2">
    <location>
        <position position="37"/>
    </location>
</feature>
<feature type="modified residue" description="Phosphoserine" evidence="16">
    <location>
        <position position="230"/>
    </location>
</feature>
<feature type="sequence variant" id="VAR_008514" description="In GALAC2; founder Romani mutation; dbSNP:rs104894572." evidence="3 4 7">
    <original>P</original>
    <variation>T</variation>
    <location>
        <position position="28"/>
    </location>
</feature>
<feature type="sequence variant" id="VAR_002547" description="In GALAC2; dbSNP:rs104894576." evidence="7 9 11">
    <original>V</original>
    <variation>M</variation>
    <location>
        <position position="32"/>
    </location>
</feature>
<feature type="sequence variant" id="VAR_023486" description="In GALAC2." evidence="4 7">
    <original>G</original>
    <variation>R</variation>
    <location>
        <position position="36"/>
    </location>
</feature>
<feature type="sequence variant" id="VAR_023487" description="In GALAC2; dbSNP:rs1555748926." evidence="4 7">
    <original>H</original>
    <variation>Y</variation>
    <location>
        <position position="44"/>
    </location>
</feature>
<feature type="sequence variant" id="VAR_023488" description="In GALAC2; dbSNP:rs1365349586." evidence="5 7">
    <original>R</original>
    <variation>C</variation>
    <location>
        <position position="68"/>
    </location>
</feature>
<feature type="sequence variant" id="VAR_023489" description="In dbSNP:rs773416476." evidence="8">
    <original>I</original>
    <variation>M</variation>
    <location>
        <position position="184"/>
    </location>
</feature>
<feature type="sequence variant" id="VAR_015746" description="In GALAC2; mild deficiency; Osaka; dbSNP:rs80084721." evidence="6 7">
    <original>A</original>
    <variation>V</variation>
    <location>
        <position position="198"/>
    </location>
</feature>
<feature type="sequence variant" id="VAR_023490" description="In GALAC2; dbSNP:rs575139300." evidence="9">
    <original>R</original>
    <variation>Q</variation>
    <location>
        <position position="239"/>
    </location>
</feature>
<feature type="sequence variant" id="VAR_023491" description="In dbSNP:rs959842362." evidence="8">
    <original>G</original>
    <variation>D</variation>
    <location>
        <position position="274"/>
    </location>
</feature>
<feature type="sequence variant" id="VAR_023492" description="In GALAC2; dbSNP:rs759284637." evidence="5 7">
    <original>T</original>
    <variation>M</variation>
    <location>
        <position position="288"/>
    </location>
</feature>
<feature type="sequence variant" id="VAR_023493" evidence="8">
    <original>V</original>
    <variation>A</variation>
    <location>
        <position position="338"/>
    </location>
</feature>
<feature type="sequence variant" id="VAR_023494" description="In GALAC2; dbSNP:rs375690568." evidence="4 7">
    <original>G</original>
    <variation>S</variation>
    <location>
        <position position="346"/>
    </location>
</feature>
<feature type="sequence variant" id="VAR_023495" description="In GALAC2; dbSNP:rs754967473." evidence="4 7">
    <original>G</original>
    <variation>S</variation>
    <location>
        <position position="349"/>
    </location>
</feature>
<feature type="sequence variant" id="VAR_023496" description="In GALAC2; dbSNP:rs1184406839." evidence="5 7">
    <original>A</original>
    <variation>P</variation>
    <location>
        <position position="384"/>
    </location>
</feature>
<feature type="helix" evidence="19">
    <location>
        <begin position="9"/>
        <end position="24"/>
    </location>
</feature>
<feature type="strand" evidence="19">
    <location>
        <begin position="29"/>
        <end position="39"/>
    </location>
</feature>
<feature type="helix" evidence="19">
    <location>
        <begin position="46"/>
        <end position="48"/>
    </location>
</feature>
<feature type="strand" evidence="19">
    <location>
        <begin position="54"/>
        <end position="67"/>
    </location>
</feature>
<feature type="strand" evidence="19">
    <location>
        <begin position="69"/>
        <end position="77"/>
    </location>
</feature>
<feature type="strand" evidence="17">
    <location>
        <begin position="80"/>
        <end position="82"/>
    </location>
</feature>
<feature type="strand" evidence="19">
    <location>
        <begin position="86"/>
        <end position="91"/>
    </location>
</feature>
<feature type="strand" evidence="18">
    <location>
        <begin position="95"/>
        <end position="97"/>
    </location>
</feature>
<feature type="strand" evidence="21">
    <location>
        <begin position="103"/>
        <end position="105"/>
    </location>
</feature>
<feature type="helix" evidence="19">
    <location>
        <begin position="106"/>
        <end position="116"/>
    </location>
</feature>
<feature type="strand" evidence="17">
    <location>
        <begin position="118"/>
        <end position="120"/>
    </location>
</feature>
<feature type="strand" evidence="19">
    <location>
        <begin position="125"/>
        <end position="131"/>
    </location>
</feature>
<feature type="strand" evidence="19">
    <location>
        <begin position="137"/>
        <end position="139"/>
    </location>
</feature>
<feature type="helix" evidence="19">
    <location>
        <begin position="141"/>
        <end position="156"/>
    </location>
</feature>
<feature type="helix" evidence="19">
    <location>
        <begin position="163"/>
        <end position="178"/>
    </location>
</feature>
<feature type="helix" evidence="19">
    <location>
        <begin position="185"/>
        <end position="192"/>
    </location>
</feature>
<feature type="strand" evidence="19">
    <location>
        <begin position="197"/>
        <end position="202"/>
    </location>
</feature>
<feature type="turn" evidence="19">
    <location>
        <begin position="203"/>
        <end position="205"/>
    </location>
</feature>
<feature type="strand" evidence="19">
    <location>
        <begin position="208"/>
        <end position="212"/>
    </location>
</feature>
<feature type="strand" evidence="19">
    <location>
        <begin position="218"/>
        <end position="228"/>
    </location>
</feature>
<feature type="helix" evidence="19">
    <location>
        <begin position="231"/>
        <end position="249"/>
    </location>
</feature>
<feature type="helix" evidence="19">
    <location>
        <begin position="255"/>
        <end position="257"/>
    </location>
</feature>
<feature type="helix" evidence="19">
    <location>
        <begin position="260"/>
        <end position="265"/>
    </location>
</feature>
<feature type="helix" evidence="19">
    <location>
        <begin position="267"/>
        <end position="269"/>
    </location>
</feature>
<feature type="helix" evidence="19">
    <location>
        <begin position="272"/>
        <end position="296"/>
    </location>
</feature>
<feature type="helix" evidence="19">
    <location>
        <begin position="300"/>
        <end position="316"/>
    </location>
</feature>
<feature type="helix" evidence="19">
    <location>
        <begin position="323"/>
        <end position="333"/>
    </location>
</feature>
<feature type="strand" evidence="19">
    <location>
        <begin position="338"/>
        <end position="343"/>
    </location>
</feature>
<feature type="strand" evidence="19">
    <location>
        <begin position="348"/>
        <end position="357"/>
    </location>
</feature>
<feature type="helix" evidence="19">
    <location>
        <begin position="358"/>
        <end position="360"/>
    </location>
</feature>
<feature type="helix" evidence="19">
    <location>
        <begin position="361"/>
        <end position="371"/>
    </location>
</feature>
<feature type="strand" evidence="20">
    <location>
        <begin position="372"/>
        <end position="374"/>
    </location>
</feature>
<feature type="strand" evidence="19">
    <location>
        <begin position="377"/>
        <end position="380"/>
    </location>
</feature>
<feature type="strand" evidence="19">
    <location>
        <begin position="387"/>
        <end position="391"/>
    </location>
</feature>
<reference key="1">
    <citation type="journal article" date="1995" name="Nat. Genet.">
        <title>Cloning of the galactokinase cDNA and identification of mutations in two families with cataracts.</title>
        <authorList>
            <person name="Stambolian D."/>
            <person name="Ai Y."/>
            <person name="Sidjanin D."/>
            <person name="Nesburn K."/>
            <person name="Sathe G."/>
            <person name="Rosenberg M."/>
            <person name="Bergsma D.J."/>
        </authorList>
    </citation>
    <scope>NUCLEOTIDE SEQUENCE [MRNA]</scope>
    <scope>VARIANT GALAC2 MET-32</scope>
</reference>
<reference key="2">
    <citation type="journal article" date="1996" name="Genome Res.">
        <title>Fine structure of the human galactokinase GALK1 gene.</title>
        <authorList>
            <person name="Bergsma D.J."/>
            <person name="Ai Y."/>
            <person name="Skach W.R."/>
            <person name="Nesburn K."/>
            <person name="Anoia E."/>
            <person name="van Horn S."/>
            <person name="Stambolian D."/>
        </authorList>
    </citation>
    <scope>NUCLEOTIDE SEQUENCE [GENOMIC DNA]</scope>
</reference>
<reference key="3">
    <citation type="journal article" date="2004" name="Nat. Genet.">
        <title>Complete sequencing and characterization of 21,243 full-length human cDNAs.</title>
        <authorList>
            <person name="Ota T."/>
            <person name="Suzuki Y."/>
            <person name="Nishikawa T."/>
            <person name="Otsuki T."/>
            <person name="Sugiyama T."/>
            <person name="Irie R."/>
            <person name="Wakamatsu A."/>
            <person name="Hayashi K."/>
            <person name="Sato H."/>
            <person name="Nagai K."/>
            <person name="Kimura K."/>
            <person name="Makita H."/>
            <person name="Sekine M."/>
            <person name="Obayashi M."/>
            <person name="Nishi T."/>
            <person name="Shibahara T."/>
            <person name="Tanaka T."/>
            <person name="Ishii S."/>
            <person name="Yamamoto J."/>
            <person name="Saito K."/>
            <person name="Kawai Y."/>
            <person name="Isono Y."/>
            <person name="Nakamura Y."/>
            <person name="Nagahari K."/>
            <person name="Murakami K."/>
            <person name="Yasuda T."/>
            <person name="Iwayanagi T."/>
            <person name="Wagatsuma M."/>
            <person name="Shiratori A."/>
            <person name="Sudo H."/>
            <person name="Hosoiri T."/>
            <person name="Kaku Y."/>
            <person name="Kodaira H."/>
            <person name="Kondo H."/>
            <person name="Sugawara M."/>
            <person name="Takahashi M."/>
            <person name="Kanda K."/>
            <person name="Yokoi T."/>
            <person name="Furuya T."/>
            <person name="Kikkawa E."/>
            <person name="Omura Y."/>
            <person name="Abe K."/>
            <person name="Kamihara K."/>
            <person name="Katsuta N."/>
            <person name="Sato K."/>
            <person name="Tanikawa M."/>
            <person name="Yamazaki M."/>
            <person name="Ninomiya K."/>
            <person name="Ishibashi T."/>
            <person name="Yamashita H."/>
            <person name="Murakawa K."/>
            <person name="Fujimori K."/>
            <person name="Tanai H."/>
            <person name="Kimata M."/>
            <person name="Watanabe M."/>
            <person name="Hiraoka S."/>
            <person name="Chiba Y."/>
            <person name="Ishida S."/>
            <person name="Ono Y."/>
            <person name="Takiguchi S."/>
            <person name="Watanabe S."/>
            <person name="Yosida M."/>
            <person name="Hotuta T."/>
            <person name="Kusano J."/>
            <person name="Kanehori K."/>
            <person name="Takahashi-Fujii A."/>
            <person name="Hara H."/>
            <person name="Tanase T.-O."/>
            <person name="Nomura Y."/>
            <person name="Togiya S."/>
            <person name="Komai F."/>
            <person name="Hara R."/>
            <person name="Takeuchi K."/>
            <person name="Arita M."/>
            <person name="Imose N."/>
            <person name="Musashino K."/>
            <person name="Yuuki H."/>
            <person name="Oshima A."/>
            <person name="Sasaki N."/>
            <person name="Aotsuka S."/>
            <person name="Yoshikawa Y."/>
            <person name="Matsunawa H."/>
            <person name="Ichihara T."/>
            <person name="Shiohata N."/>
            <person name="Sano S."/>
            <person name="Moriya S."/>
            <person name="Momiyama H."/>
            <person name="Satoh N."/>
            <person name="Takami S."/>
            <person name="Terashima Y."/>
            <person name="Suzuki O."/>
            <person name="Nakagawa S."/>
            <person name="Senoh A."/>
            <person name="Mizoguchi H."/>
            <person name="Goto Y."/>
            <person name="Shimizu F."/>
            <person name="Wakebe H."/>
            <person name="Hishigaki H."/>
            <person name="Watanabe T."/>
            <person name="Sugiyama A."/>
            <person name="Takemoto M."/>
            <person name="Kawakami B."/>
            <person name="Yamazaki M."/>
            <person name="Watanabe K."/>
            <person name="Kumagai A."/>
            <person name="Itakura S."/>
            <person name="Fukuzumi Y."/>
            <person name="Fujimori Y."/>
            <person name="Komiyama M."/>
            <person name="Tashiro H."/>
            <person name="Tanigami A."/>
            <person name="Fujiwara T."/>
            <person name="Ono T."/>
            <person name="Yamada K."/>
            <person name="Fujii Y."/>
            <person name="Ozaki K."/>
            <person name="Hirao M."/>
            <person name="Ohmori Y."/>
            <person name="Kawabata A."/>
            <person name="Hikiji T."/>
            <person name="Kobatake N."/>
            <person name="Inagaki H."/>
            <person name="Ikema Y."/>
            <person name="Okamoto S."/>
            <person name="Okitani R."/>
            <person name="Kawakami T."/>
            <person name="Noguchi S."/>
            <person name="Itoh T."/>
            <person name="Shigeta K."/>
            <person name="Senba T."/>
            <person name="Matsumura K."/>
            <person name="Nakajima Y."/>
            <person name="Mizuno T."/>
            <person name="Morinaga M."/>
            <person name="Sasaki M."/>
            <person name="Togashi T."/>
            <person name="Oyama M."/>
            <person name="Hata H."/>
            <person name="Watanabe M."/>
            <person name="Komatsu T."/>
            <person name="Mizushima-Sugano J."/>
            <person name="Satoh T."/>
            <person name="Shirai Y."/>
            <person name="Takahashi Y."/>
            <person name="Nakagawa K."/>
            <person name="Okumura K."/>
            <person name="Nagase T."/>
            <person name="Nomura N."/>
            <person name="Kikuchi H."/>
            <person name="Masuho Y."/>
            <person name="Yamashita R."/>
            <person name="Nakai K."/>
            <person name="Yada T."/>
            <person name="Nakamura Y."/>
            <person name="Ohara O."/>
            <person name="Isogai T."/>
            <person name="Sugano S."/>
        </authorList>
    </citation>
    <scope>NUCLEOTIDE SEQUENCE [LARGE SCALE MRNA]</scope>
    <source>
        <tissue>Lung</tissue>
    </source>
</reference>
<reference key="4">
    <citation type="submission" date="2004-10" db="EMBL/GenBank/DDBJ databases">
        <title>Cloning of human full-length CDSs in BD Creator(TM) system donor vector.</title>
        <authorList>
            <person name="Kalnine N."/>
            <person name="Chen X."/>
            <person name="Rolfs A."/>
            <person name="Halleck A."/>
            <person name="Hines L."/>
            <person name="Eisenstein S."/>
            <person name="Koundinya M."/>
            <person name="Raphael J."/>
            <person name="Moreira D."/>
            <person name="Kelley T."/>
            <person name="LaBaer J."/>
            <person name="Lin Y."/>
            <person name="Phelan M."/>
            <person name="Farmer A."/>
        </authorList>
    </citation>
    <scope>NUCLEOTIDE SEQUENCE [LARGE SCALE MRNA]</scope>
</reference>
<reference key="5">
    <citation type="journal article" date="2006" name="Nature">
        <title>DNA sequence of human chromosome 17 and analysis of rearrangement in the human lineage.</title>
        <authorList>
            <person name="Zody M.C."/>
            <person name="Garber M."/>
            <person name="Adams D.J."/>
            <person name="Sharpe T."/>
            <person name="Harrow J."/>
            <person name="Lupski J.R."/>
            <person name="Nicholson C."/>
            <person name="Searle S.M."/>
            <person name="Wilming L."/>
            <person name="Young S.K."/>
            <person name="Abouelleil A."/>
            <person name="Allen N.R."/>
            <person name="Bi W."/>
            <person name="Bloom T."/>
            <person name="Borowsky M.L."/>
            <person name="Bugalter B.E."/>
            <person name="Butler J."/>
            <person name="Chang J.L."/>
            <person name="Chen C.-K."/>
            <person name="Cook A."/>
            <person name="Corum B."/>
            <person name="Cuomo C.A."/>
            <person name="de Jong P.J."/>
            <person name="DeCaprio D."/>
            <person name="Dewar K."/>
            <person name="FitzGerald M."/>
            <person name="Gilbert J."/>
            <person name="Gibson R."/>
            <person name="Gnerre S."/>
            <person name="Goldstein S."/>
            <person name="Grafham D.V."/>
            <person name="Grocock R."/>
            <person name="Hafez N."/>
            <person name="Hagopian D.S."/>
            <person name="Hart E."/>
            <person name="Norman C.H."/>
            <person name="Humphray S."/>
            <person name="Jaffe D.B."/>
            <person name="Jones M."/>
            <person name="Kamal M."/>
            <person name="Khodiyar V.K."/>
            <person name="LaButti K."/>
            <person name="Laird G."/>
            <person name="Lehoczky J."/>
            <person name="Liu X."/>
            <person name="Lokyitsang T."/>
            <person name="Loveland J."/>
            <person name="Lui A."/>
            <person name="Macdonald P."/>
            <person name="Major J.E."/>
            <person name="Matthews L."/>
            <person name="Mauceli E."/>
            <person name="McCarroll S.A."/>
            <person name="Mihalev A.H."/>
            <person name="Mudge J."/>
            <person name="Nguyen C."/>
            <person name="Nicol R."/>
            <person name="O'Leary S.B."/>
            <person name="Osoegawa K."/>
            <person name="Schwartz D.C."/>
            <person name="Shaw-Smith C."/>
            <person name="Stankiewicz P."/>
            <person name="Steward C."/>
            <person name="Swarbreck D."/>
            <person name="Venkataraman V."/>
            <person name="Whittaker C.A."/>
            <person name="Yang X."/>
            <person name="Zimmer A.R."/>
            <person name="Bradley A."/>
            <person name="Hubbard T."/>
            <person name="Birren B.W."/>
            <person name="Rogers J."/>
            <person name="Lander E.S."/>
            <person name="Nusbaum C."/>
        </authorList>
    </citation>
    <scope>NUCLEOTIDE SEQUENCE [LARGE SCALE GENOMIC DNA]</scope>
</reference>
<reference key="6">
    <citation type="submission" date="2005-07" db="EMBL/GenBank/DDBJ databases">
        <authorList>
            <person name="Mural R.J."/>
            <person name="Istrail S."/>
            <person name="Sutton G."/>
            <person name="Florea L."/>
            <person name="Halpern A.L."/>
            <person name="Mobarry C.M."/>
            <person name="Lippert R."/>
            <person name="Walenz B."/>
            <person name="Shatkay H."/>
            <person name="Dew I."/>
            <person name="Miller J.R."/>
            <person name="Flanigan M.J."/>
            <person name="Edwards N.J."/>
            <person name="Bolanos R."/>
            <person name="Fasulo D."/>
            <person name="Halldorsson B.V."/>
            <person name="Hannenhalli S."/>
            <person name="Turner R."/>
            <person name="Yooseph S."/>
            <person name="Lu F."/>
            <person name="Nusskern D.R."/>
            <person name="Shue B.C."/>
            <person name="Zheng X.H."/>
            <person name="Zhong F."/>
            <person name="Delcher A.L."/>
            <person name="Huson D.H."/>
            <person name="Kravitz S.A."/>
            <person name="Mouchard L."/>
            <person name="Reinert K."/>
            <person name="Remington K.A."/>
            <person name="Clark A.G."/>
            <person name="Waterman M.S."/>
            <person name="Eichler E.E."/>
            <person name="Adams M.D."/>
            <person name="Hunkapiller M.W."/>
            <person name="Myers E.W."/>
            <person name="Venter J.C."/>
        </authorList>
    </citation>
    <scope>NUCLEOTIDE SEQUENCE [LARGE SCALE GENOMIC DNA]</scope>
</reference>
<reference key="7">
    <citation type="journal article" date="2004" name="Genome Res.">
        <title>The status, quality, and expansion of the NIH full-length cDNA project: the Mammalian Gene Collection (MGC).</title>
        <authorList>
            <consortium name="The MGC Project Team"/>
        </authorList>
    </citation>
    <scope>NUCLEOTIDE SEQUENCE [LARGE SCALE MRNA]</scope>
    <source>
        <tissue>Brain</tissue>
    </source>
</reference>
<reference key="8">
    <citation type="submission" date="2008-12" db="UniProtKB">
        <authorList>
            <person name="Lubec G."/>
            <person name="Chen W.-Q."/>
            <person name="Sun Y."/>
        </authorList>
    </citation>
    <scope>PROTEIN SEQUENCE OF 6-17; 22-37; 70-97; 205-239; 257-267; 288-296 AND 343-388</scope>
    <scope>IDENTIFICATION BY MASS SPECTROMETRY</scope>
    <source>
        <tissue>Fetal brain cortex</tissue>
    </source>
</reference>
<reference key="9">
    <citation type="journal article" date="1995" name="Biochem. Biophys. Res. Commun.">
        <title>Comparison of the enzymatic activities of human galactokinase GALK1 and a related human galactokinase protein GK2.</title>
        <authorList>
            <person name="Ai Y."/>
            <person name="Basu M."/>
            <person name="Bergsma D.J."/>
            <person name="Stambolian D."/>
        </authorList>
    </citation>
    <scope>FUNCTION</scope>
    <scope>CATALYTIC ACTIVITY</scope>
</reference>
<reference key="10">
    <citation type="journal article" date="2011" name="BMC Syst. Biol.">
        <title>Initial characterization of the human central proteome.</title>
        <authorList>
            <person name="Burkard T.R."/>
            <person name="Planyavsky M."/>
            <person name="Kaupe I."/>
            <person name="Breitwieser F.P."/>
            <person name="Buerckstuemmer T."/>
            <person name="Bennett K.L."/>
            <person name="Superti-Furga G."/>
            <person name="Colinge J."/>
        </authorList>
    </citation>
    <scope>IDENTIFICATION BY MASS SPECTROMETRY [LARGE SCALE ANALYSIS]</scope>
</reference>
<reference key="11">
    <citation type="journal article" date="2014" name="J. Proteomics">
        <title>An enzyme assisted RP-RPLC approach for in-depth analysis of human liver phosphoproteome.</title>
        <authorList>
            <person name="Bian Y."/>
            <person name="Song C."/>
            <person name="Cheng K."/>
            <person name="Dong M."/>
            <person name="Wang F."/>
            <person name="Huang J."/>
            <person name="Sun D."/>
            <person name="Wang L."/>
            <person name="Ye M."/>
            <person name="Zou H."/>
        </authorList>
    </citation>
    <scope>PHOSPHORYLATION [LARGE SCALE ANALYSIS] AT SER-230</scope>
    <scope>IDENTIFICATION BY MASS SPECTROMETRY [LARGE SCALE ANALYSIS]</scope>
    <source>
        <tissue>Liver</tissue>
    </source>
</reference>
<reference key="12">
    <citation type="journal article" date="2015" name="Proteomics">
        <title>N-terminome analysis of the human mitochondrial proteome.</title>
        <authorList>
            <person name="Vaca Jacome A.S."/>
            <person name="Rabilloud T."/>
            <person name="Schaeffer-Reiss C."/>
            <person name="Rompais M."/>
            <person name="Ayoub D."/>
            <person name="Lane L."/>
            <person name="Bairoch A."/>
            <person name="Van Dorsselaer A."/>
            <person name="Carapito C."/>
        </authorList>
    </citation>
    <scope>IDENTIFICATION BY MASS SPECTROMETRY [LARGE SCALE ANALYSIS]</scope>
</reference>
<reference key="13">
    <citation type="journal article" date="2005" name="J. Biol. Chem.">
        <title>Molecular structure of human galactokinase: implications for type II galactosemia.</title>
        <authorList>
            <person name="Thoden J.B."/>
            <person name="Timson D.J."/>
            <person name="Reece R.J."/>
            <person name="Holden H.M."/>
        </authorList>
    </citation>
    <scope>X-RAY CRYSTALLOGRAPHY (2.5 ANGSTROMS) OF 2-392 IN COMPLEX WITH D-GALACTOSE AND ATP ANALOG</scope>
    <scope>SUBUNIT</scope>
    <scope>SUBSTRATE-BINDING SITES</scope>
</reference>
<reference key="14">
    <citation type="journal article" date="1999" name="Am. J. Hum. Genet.">
        <title>A founder mutation in the GK1 gene is responsible for galactokinase deficiency in Roma (Gypsies).</title>
        <authorList>
            <person name="Kalaydjieva L."/>
            <person name="Perez-Lezaun A."/>
            <person name="Angelicheva D."/>
            <person name="Onengut S."/>
            <person name="Dye D."/>
            <person name="Bosshard N.U."/>
            <person name="Jordanova A."/>
            <person name="Savov A."/>
            <person name="Yanakiev P."/>
            <person name="Kremensky I."/>
            <person name="Radeva B."/>
            <person name="Hallmayer J."/>
            <person name="Markov A."/>
            <person name="Nedkova V."/>
            <person name="Tournev I."/>
            <person name="Aneva L."/>
            <person name="Gitzelmann R."/>
        </authorList>
    </citation>
    <scope>VARIANT GALAC2 THR-28</scope>
</reference>
<reference key="15">
    <citation type="journal article" date="2000" name="Hum. Mutat.">
        <title>Novel mutations in 13 probands with galactokinase deficiency.</title>
        <authorList>
            <person name="Kolosha V."/>
            <person name="Anoia E."/>
            <person name="de Cespedes C."/>
            <person name="Gitzelmann R."/>
            <person name="Shih L."/>
            <person name="Casco T."/>
            <person name="Saborio M."/>
            <person name="Trejos R."/>
            <person name="Buist N."/>
            <person name="Tedesco T."/>
            <person name="Skach W."/>
            <person name="Mitelmann O."/>
            <person name="Ledee D."/>
            <person name="Huang K."/>
            <person name="Stambolian D."/>
        </authorList>
    </citation>
    <scope>VARIANTS GALAC2 THR-28; ARG-36; TYR-44; SER-346 AND SER-349</scope>
</reference>
<reference key="16">
    <citation type="journal article" date="2001" name="Am. J. Hum. Genet.">
        <title>A genetic factor for age-related cataract: identification and characterization of a novel galactokinase variant, 'Osaka,' in Asians.</title>
        <authorList>
            <person name="Okano Y."/>
            <person name="Asada M."/>
            <person name="Fujimoto A."/>
            <person name="Ohtake A."/>
            <person name="Murayama K."/>
            <person name="Hsiao K.-J."/>
            <person name="Choeh K."/>
            <person name="Yang Y."/>
            <person name="Cao Q."/>
            <person name="Reichardt J.K.V."/>
            <person name="Niihira S."/>
            <person name="Imamura T."/>
            <person name="Yamano T."/>
        </authorList>
    </citation>
    <scope>VARIANT GALAC2 VAL-198</scope>
</reference>
<reference key="17">
    <citation type="journal article" date="2001" name="Hum. Mutat.">
        <title>Novel mutations in the GALK1 gene in patients with galactokinase deficiency.</title>
        <authorList>
            <person name="Hunter M."/>
            <person name="Angelicheva D."/>
            <person name="Levy H.L."/>
            <person name="Pueschel S.M."/>
            <person name="Kalaydjieva L."/>
        </authorList>
    </citation>
    <scope>VARIANTS GALAC2 CYS-68; MET-288 AND PRO-384</scope>
</reference>
<reference key="18">
    <citation type="journal article" date="2003" name="Eur. J. Biochem.">
        <title>Functional analysis of disease-causing mutations in human galactokinase.</title>
        <authorList>
            <person name="Timson D.J."/>
            <person name="Reece R.J."/>
        </authorList>
    </citation>
    <scope>CHARACTERIZATION OF VARIANTS GALAC2 THR-28; MET-32; ARG-36; TYR-44; CYS-68; VAL-198; MET-288; SER-346; SER-349 AND PRO-384</scope>
    <scope>CATALYTIC ACTIVITY</scope>
    <scope>FUNCTION</scope>
    <scope>BIOPHYSICOCHEMICAL PROPERTIES</scope>
</reference>
<reference key="19">
    <citation type="journal article" date="2003" name="Mol. Vis.">
        <title>Galactokinase gene mutations and age-related cataract. Lack of association in an Italian population.</title>
        <authorList>
            <person name="Maraini G."/>
            <person name="Hejtmancik J.F."/>
            <person name="Shiels A."/>
            <person name="Mackay D.S."/>
            <person name="Aldigeri R."/>
            <person name="Jiao X.D."/>
            <person name="Williams S.L."/>
            <person name="Sperduto R.D."/>
            <person name="Reed G."/>
        </authorList>
    </citation>
    <scope>VARIANTS MET-184; ASP-274 AND ALA-338</scope>
</reference>
<reference key="20">
    <citation type="journal article" date="2004" name="Hum. Mutat.">
        <title>Biochemical characterization of two GALK1 mutations in patients with galactokinase deficiency.</title>
        <authorList>
            <person name="Sangiuolo F."/>
            <person name="Magnani M."/>
            <person name="Stambolian D."/>
            <person name="Novelli G."/>
        </authorList>
    </citation>
    <scope>VARIANTS GALAC2 MET-32 AND GLN-239</scope>
</reference>
<sequence>MAALRQPQVAELLAEARRAFREEFGAEPELAVSAPGRVNLIGEHTDYNQGLVLPMALELMTVLVGSPRKDGLVSLLTTSEGADEPQRLQFPLPTAQRSLEPGTPRWANYVKGVIQYYPAAPLPGFSAVVVSSVPLGGGLSSSASLEVATYTFLQQLCPDSGTIAARAQVCQQAEHSFAGMPCGIMDQFISLMGQKGHALLIDCRSLETSLVPLSDPKLAVLITNSNVRHSLASSEYPVRRRQCEEVARALGKESLREVQLEELEAARDLVSKEGFRRARHVVGEIRRTAQAAAALRRGDYRAFGRLMVESHRSLRDDYEVSCPELDQLVEAALAVPGVYGSRMTGGGFGGCTVTLLEASAAPHAMRHIQEHYGGTATFYLSQAADGAKVLCL</sequence>